<dbReference type="EC" id="6.3.1.5" evidence="1"/>
<dbReference type="EMBL" id="CP001144">
    <property type="protein sequence ID" value="ACH77334.1"/>
    <property type="molecule type" value="Genomic_DNA"/>
</dbReference>
<dbReference type="RefSeq" id="WP_000174980.1">
    <property type="nucleotide sequence ID" value="NC_011205.1"/>
</dbReference>
<dbReference type="SMR" id="B5FJD0"/>
<dbReference type="KEGG" id="sed:SeD_A2034"/>
<dbReference type="HOGENOM" id="CLU_059327_3_0_6"/>
<dbReference type="UniPathway" id="UPA00253">
    <property type="reaction ID" value="UER00333"/>
</dbReference>
<dbReference type="Proteomes" id="UP000008322">
    <property type="component" value="Chromosome"/>
</dbReference>
<dbReference type="GO" id="GO:0005737">
    <property type="term" value="C:cytoplasm"/>
    <property type="evidence" value="ECO:0007669"/>
    <property type="project" value="InterPro"/>
</dbReference>
<dbReference type="GO" id="GO:0005524">
    <property type="term" value="F:ATP binding"/>
    <property type="evidence" value="ECO:0007669"/>
    <property type="project" value="UniProtKB-UniRule"/>
</dbReference>
<dbReference type="GO" id="GO:0004359">
    <property type="term" value="F:glutaminase activity"/>
    <property type="evidence" value="ECO:0007669"/>
    <property type="project" value="InterPro"/>
</dbReference>
<dbReference type="GO" id="GO:0046872">
    <property type="term" value="F:metal ion binding"/>
    <property type="evidence" value="ECO:0007669"/>
    <property type="project" value="UniProtKB-KW"/>
</dbReference>
<dbReference type="GO" id="GO:0003952">
    <property type="term" value="F:NAD+ synthase (glutamine-hydrolyzing) activity"/>
    <property type="evidence" value="ECO:0007669"/>
    <property type="project" value="InterPro"/>
</dbReference>
<dbReference type="GO" id="GO:0008795">
    <property type="term" value="F:NAD+ synthase activity"/>
    <property type="evidence" value="ECO:0007669"/>
    <property type="project" value="UniProtKB-UniRule"/>
</dbReference>
<dbReference type="GO" id="GO:0009435">
    <property type="term" value="P:NAD biosynthetic process"/>
    <property type="evidence" value="ECO:0007669"/>
    <property type="project" value="UniProtKB-UniRule"/>
</dbReference>
<dbReference type="CDD" id="cd00553">
    <property type="entry name" value="NAD_synthase"/>
    <property type="match status" value="1"/>
</dbReference>
<dbReference type="FunFam" id="3.40.50.620:FF:000015">
    <property type="entry name" value="NH(3)-dependent NAD(+) synthetase"/>
    <property type="match status" value="1"/>
</dbReference>
<dbReference type="Gene3D" id="3.40.50.620">
    <property type="entry name" value="HUPs"/>
    <property type="match status" value="1"/>
</dbReference>
<dbReference type="HAMAP" id="MF_00193">
    <property type="entry name" value="NadE_ammonia_dep"/>
    <property type="match status" value="1"/>
</dbReference>
<dbReference type="InterPro" id="IPR022310">
    <property type="entry name" value="NAD/GMP_synthase"/>
</dbReference>
<dbReference type="InterPro" id="IPR003694">
    <property type="entry name" value="NAD_synthase"/>
</dbReference>
<dbReference type="InterPro" id="IPR022926">
    <property type="entry name" value="NH(3)-dep_NAD(+)_synth"/>
</dbReference>
<dbReference type="InterPro" id="IPR014729">
    <property type="entry name" value="Rossmann-like_a/b/a_fold"/>
</dbReference>
<dbReference type="NCBIfam" id="TIGR00552">
    <property type="entry name" value="nadE"/>
    <property type="match status" value="1"/>
</dbReference>
<dbReference type="NCBIfam" id="NF001979">
    <property type="entry name" value="PRK00768.1"/>
    <property type="match status" value="1"/>
</dbReference>
<dbReference type="PANTHER" id="PTHR23090">
    <property type="entry name" value="NH 3 /GLUTAMINE-DEPENDENT NAD + SYNTHETASE"/>
    <property type="match status" value="1"/>
</dbReference>
<dbReference type="PANTHER" id="PTHR23090:SF7">
    <property type="entry name" value="NH(3)-DEPENDENT NAD(+) SYNTHETASE"/>
    <property type="match status" value="1"/>
</dbReference>
<dbReference type="Pfam" id="PF02540">
    <property type="entry name" value="NAD_synthase"/>
    <property type="match status" value="1"/>
</dbReference>
<dbReference type="SUPFAM" id="SSF52402">
    <property type="entry name" value="Adenine nucleotide alpha hydrolases-like"/>
    <property type="match status" value="1"/>
</dbReference>
<organism>
    <name type="scientific">Salmonella dublin (strain CT_02021853)</name>
    <dbReference type="NCBI Taxonomy" id="439851"/>
    <lineage>
        <taxon>Bacteria</taxon>
        <taxon>Pseudomonadati</taxon>
        <taxon>Pseudomonadota</taxon>
        <taxon>Gammaproteobacteria</taxon>
        <taxon>Enterobacterales</taxon>
        <taxon>Enterobacteriaceae</taxon>
        <taxon>Salmonella</taxon>
    </lineage>
</organism>
<sequence>MTLQQEIIQALGAKPHINPEEEIRRSVDFLKAYLKTYPFLKSLVLGISGGQDSTLAGKLSQMAIAELREETGDNALQFIAVRLPYGVQADEQDCQDAIAFIQPDRVLTVNIKGAVLASEQALREAGIELSDFVRGNEKARERMKAQYSIAGMTHGVVVGTDHAAEAITGFFTKYGDGGTDINPLHRLNKRQGKQLLAALGCPEHLYKKVPTADLEDDRPSLPDEAALGVTYDNIDDYLEGKTLDPAIAKTIEGWYVKTEHKRRLPITVFDDFWKK</sequence>
<accession>B5FJD0</accession>
<gene>
    <name evidence="1" type="primary">nadE</name>
    <name type="ordered locus">SeD_A2034</name>
</gene>
<evidence type="ECO:0000255" key="1">
    <source>
        <dbReference type="HAMAP-Rule" id="MF_00193"/>
    </source>
</evidence>
<proteinExistence type="inferred from homology"/>
<comment type="function">
    <text evidence="1">Catalyzes the ATP-dependent amidation of deamido-NAD to form NAD. Uses ammonia as a nitrogen source.</text>
</comment>
<comment type="catalytic activity">
    <reaction evidence="1">
        <text>deamido-NAD(+) + NH4(+) + ATP = AMP + diphosphate + NAD(+) + H(+)</text>
        <dbReference type="Rhea" id="RHEA:21188"/>
        <dbReference type="ChEBI" id="CHEBI:15378"/>
        <dbReference type="ChEBI" id="CHEBI:28938"/>
        <dbReference type="ChEBI" id="CHEBI:30616"/>
        <dbReference type="ChEBI" id="CHEBI:33019"/>
        <dbReference type="ChEBI" id="CHEBI:57540"/>
        <dbReference type="ChEBI" id="CHEBI:58437"/>
        <dbReference type="ChEBI" id="CHEBI:456215"/>
        <dbReference type="EC" id="6.3.1.5"/>
    </reaction>
</comment>
<comment type="pathway">
    <text evidence="1">Cofactor biosynthesis; NAD(+) biosynthesis; NAD(+) from deamido-NAD(+) (ammonia route): step 1/1.</text>
</comment>
<comment type="subunit">
    <text evidence="1">Homodimer.</text>
</comment>
<comment type="similarity">
    <text evidence="1">Belongs to the NAD synthetase family.</text>
</comment>
<reference key="1">
    <citation type="journal article" date="2011" name="J. Bacteriol.">
        <title>Comparative genomics of 28 Salmonella enterica isolates: evidence for CRISPR-mediated adaptive sublineage evolution.</title>
        <authorList>
            <person name="Fricke W.F."/>
            <person name="Mammel M.K."/>
            <person name="McDermott P.F."/>
            <person name="Tartera C."/>
            <person name="White D.G."/>
            <person name="Leclerc J.E."/>
            <person name="Ravel J."/>
            <person name="Cebula T.A."/>
        </authorList>
    </citation>
    <scope>NUCLEOTIDE SEQUENCE [LARGE SCALE GENOMIC DNA]</scope>
    <source>
        <strain>CT_02021853</strain>
    </source>
</reference>
<protein>
    <recommendedName>
        <fullName evidence="1">NH(3)-dependent NAD(+) synthetase</fullName>
        <ecNumber evidence="1">6.3.1.5</ecNumber>
    </recommendedName>
</protein>
<keyword id="KW-0067">ATP-binding</keyword>
<keyword id="KW-0436">Ligase</keyword>
<keyword id="KW-0460">Magnesium</keyword>
<keyword id="KW-0479">Metal-binding</keyword>
<keyword id="KW-0520">NAD</keyword>
<keyword id="KW-0547">Nucleotide-binding</keyword>
<feature type="chain" id="PRO_1000099038" description="NH(3)-dependent NAD(+) synthetase">
    <location>
        <begin position="1"/>
        <end position="275"/>
    </location>
</feature>
<feature type="binding site" evidence="1">
    <location>
        <begin position="46"/>
        <end position="53"/>
    </location>
    <ligand>
        <name>ATP</name>
        <dbReference type="ChEBI" id="CHEBI:30616"/>
    </ligand>
</feature>
<feature type="binding site" evidence="1">
    <location>
        <position position="52"/>
    </location>
    <ligand>
        <name>Mg(2+)</name>
        <dbReference type="ChEBI" id="CHEBI:18420"/>
    </ligand>
</feature>
<feature type="binding site" evidence="1">
    <location>
        <position position="140"/>
    </location>
    <ligand>
        <name>deamido-NAD(+)</name>
        <dbReference type="ChEBI" id="CHEBI:58437"/>
    </ligand>
</feature>
<feature type="binding site" evidence="1">
    <location>
        <position position="160"/>
    </location>
    <ligand>
        <name>ATP</name>
        <dbReference type="ChEBI" id="CHEBI:30616"/>
    </ligand>
</feature>
<feature type="binding site" evidence="1">
    <location>
        <position position="165"/>
    </location>
    <ligand>
        <name>Mg(2+)</name>
        <dbReference type="ChEBI" id="CHEBI:18420"/>
    </ligand>
</feature>
<feature type="binding site" evidence="1">
    <location>
        <position position="173"/>
    </location>
    <ligand>
        <name>deamido-NAD(+)</name>
        <dbReference type="ChEBI" id="CHEBI:58437"/>
    </ligand>
</feature>
<feature type="binding site" evidence="1">
    <location>
        <position position="180"/>
    </location>
    <ligand>
        <name>deamido-NAD(+)</name>
        <dbReference type="ChEBI" id="CHEBI:58437"/>
    </ligand>
</feature>
<feature type="binding site" evidence="1">
    <location>
        <position position="189"/>
    </location>
    <ligand>
        <name>ATP</name>
        <dbReference type="ChEBI" id="CHEBI:30616"/>
    </ligand>
</feature>
<feature type="binding site" evidence="1">
    <location>
        <position position="211"/>
    </location>
    <ligand>
        <name>ATP</name>
        <dbReference type="ChEBI" id="CHEBI:30616"/>
    </ligand>
</feature>
<feature type="binding site" evidence="1">
    <location>
        <begin position="260"/>
        <end position="261"/>
    </location>
    <ligand>
        <name>deamido-NAD(+)</name>
        <dbReference type="ChEBI" id="CHEBI:58437"/>
    </ligand>
</feature>
<name>NADE_SALDC</name>